<protein>
    <recommendedName>
        <fullName evidence="1">Cell division protein SepF</fullName>
    </recommendedName>
</protein>
<comment type="function">
    <text evidence="1">Cell division protein that is part of the divisome complex and is recruited early to the Z-ring. Probably stimulates Z-ring formation, perhaps through the cross-linking of FtsZ protofilaments. Its function overlaps with FtsA.</text>
</comment>
<comment type="subunit">
    <text evidence="1">Homodimer. Interacts with FtsZ.</text>
</comment>
<comment type="subcellular location">
    <subcellularLocation>
        <location evidence="1">Cytoplasm</location>
    </subcellularLocation>
    <text evidence="1">Localizes to the division site, in a FtsZ-dependent manner.</text>
</comment>
<comment type="similarity">
    <text evidence="1">Belongs to the SepF family.</text>
</comment>
<proteinExistence type="inferred from homology"/>
<keyword id="KW-0131">Cell cycle</keyword>
<keyword id="KW-0132">Cell division</keyword>
<keyword id="KW-0963">Cytoplasm</keyword>
<keyword id="KW-0717">Septation</keyword>
<name>SEPF_CLOB8</name>
<gene>
    <name evidence="1" type="primary">sepF</name>
    <name type="ordered locus">Cbei_1589</name>
</gene>
<evidence type="ECO:0000255" key="1">
    <source>
        <dbReference type="HAMAP-Rule" id="MF_01197"/>
    </source>
</evidence>
<dbReference type="EMBL" id="CP000721">
    <property type="protein sequence ID" value="ABR33763.1"/>
    <property type="molecule type" value="Genomic_DNA"/>
</dbReference>
<dbReference type="RefSeq" id="WP_011968915.1">
    <property type="nucleotide sequence ID" value="NC_009617.1"/>
</dbReference>
<dbReference type="SMR" id="A6LTT3"/>
<dbReference type="KEGG" id="cbe:Cbei_1589"/>
<dbReference type="eggNOG" id="COG1799">
    <property type="taxonomic scope" value="Bacteria"/>
</dbReference>
<dbReference type="HOGENOM" id="CLU_078499_4_0_9"/>
<dbReference type="Proteomes" id="UP000000565">
    <property type="component" value="Chromosome"/>
</dbReference>
<dbReference type="GO" id="GO:0005737">
    <property type="term" value="C:cytoplasm"/>
    <property type="evidence" value="ECO:0007669"/>
    <property type="project" value="UniProtKB-SubCell"/>
</dbReference>
<dbReference type="GO" id="GO:0000917">
    <property type="term" value="P:division septum assembly"/>
    <property type="evidence" value="ECO:0007669"/>
    <property type="project" value="UniProtKB-KW"/>
</dbReference>
<dbReference type="GO" id="GO:0043093">
    <property type="term" value="P:FtsZ-dependent cytokinesis"/>
    <property type="evidence" value="ECO:0007669"/>
    <property type="project" value="UniProtKB-UniRule"/>
</dbReference>
<dbReference type="Gene3D" id="3.30.110.150">
    <property type="entry name" value="SepF-like protein"/>
    <property type="match status" value="1"/>
</dbReference>
<dbReference type="HAMAP" id="MF_01197">
    <property type="entry name" value="SepF"/>
    <property type="match status" value="1"/>
</dbReference>
<dbReference type="InterPro" id="IPR023052">
    <property type="entry name" value="Cell_div_SepF"/>
</dbReference>
<dbReference type="InterPro" id="IPR007561">
    <property type="entry name" value="Cell_div_SepF/SepF-rel"/>
</dbReference>
<dbReference type="InterPro" id="IPR038594">
    <property type="entry name" value="SepF-like_sf"/>
</dbReference>
<dbReference type="PANTHER" id="PTHR35798">
    <property type="entry name" value="CELL DIVISION PROTEIN SEPF"/>
    <property type="match status" value="1"/>
</dbReference>
<dbReference type="PANTHER" id="PTHR35798:SF1">
    <property type="entry name" value="CELL DIVISION PROTEIN SEPF"/>
    <property type="match status" value="1"/>
</dbReference>
<dbReference type="Pfam" id="PF04472">
    <property type="entry name" value="SepF"/>
    <property type="match status" value="1"/>
</dbReference>
<organism>
    <name type="scientific">Clostridium beijerinckii (strain ATCC 51743 / NCIMB 8052)</name>
    <name type="common">Clostridium acetobutylicum</name>
    <dbReference type="NCBI Taxonomy" id="290402"/>
    <lineage>
        <taxon>Bacteria</taxon>
        <taxon>Bacillati</taxon>
        <taxon>Bacillota</taxon>
        <taxon>Clostridia</taxon>
        <taxon>Eubacteriales</taxon>
        <taxon>Clostridiaceae</taxon>
        <taxon>Clostridium</taxon>
    </lineage>
</organism>
<reference key="1">
    <citation type="submission" date="2007-06" db="EMBL/GenBank/DDBJ databases">
        <title>Complete sequence of Clostridium beijerinckii NCIMB 8052.</title>
        <authorList>
            <consortium name="US DOE Joint Genome Institute"/>
            <person name="Copeland A."/>
            <person name="Lucas S."/>
            <person name="Lapidus A."/>
            <person name="Barry K."/>
            <person name="Detter J.C."/>
            <person name="Glavina del Rio T."/>
            <person name="Hammon N."/>
            <person name="Israni S."/>
            <person name="Dalin E."/>
            <person name="Tice H."/>
            <person name="Pitluck S."/>
            <person name="Sims D."/>
            <person name="Brettin T."/>
            <person name="Bruce D."/>
            <person name="Tapia R."/>
            <person name="Brainard J."/>
            <person name="Schmutz J."/>
            <person name="Larimer F."/>
            <person name="Land M."/>
            <person name="Hauser L."/>
            <person name="Kyrpides N."/>
            <person name="Mikhailova N."/>
            <person name="Bennet G."/>
            <person name="Cann I."/>
            <person name="Chen J.-S."/>
            <person name="Contreras A.L."/>
            <person name="Jones D."/>
            <person name="Kashket E."/>
            <person name="Mitchell W."/>
            <person name="Stoddard S."/>
            <person name="Schwarz W."/>
            <person name="Qureshi N."/>
            <person name="Young M."/>
            <person name="Shi Z."/>
            <person name="Ezeji T."/>
            <person name="White B."/>
            <person name="Blaschek H."/>
            <person name="Richardson P."/>
        </authorList>
    </citation>
    <scope>NUCLEOTIDE SEQUENCE [LARGE SCALE GENOMIC DNA]</scope>
    <source>
        <strain>ATCC 51743 / NCIMB 8052</strain>
    </source>
</reference>
<sequence length="150" mass="17114">MGNVISKVKSLLGFEDYEEYDEYEEEQYEEQVKDEDEIEPVITNKKNSKVVNIHTSSTTKVTITKPIDYEEATEICEALKNRRIVLVNTTVLELKIAQRLLDFISGSCYALGGELQQIEKGVYILSPSNVEVTNELKNELSSKALFNWSK</sequence>
<accession>A6LTT3</accession>
<feature type="chain" id="PRO_0000333994" description="Cell division protein SepF">
    <location>
        <begin position="1"/>
        <end position="150"/>
    </location>
</feature>